<reference key="1">
    <citation type="submission" date="2006-11" db="EMBL/GenBank/DDBJ databases">
        <title>Identification and characterization of a new conjugation/ type IVA secretion system (trb/tra) of L. pneumophila Corby localized on a mobile genomic island.</title>
        <authorList>
            <person name="Gloeckner G."/>
            <person name="Albert-Weissenberger C."/>
            <person name="Weinmann E."/>
            <person name="Jacobi S."/>
            <person name="Schunder E."/>
            <person name="Steinert M."/>
            <person name="Buchrieser C."/>
            <person name="Hacker J."/>
            <person name="Heuner K."/>
        </authorList>
    </citation>
    <scope>NUCLEOTIDE SEQUENCE [LARGE SCALE GENOMIC DNA]</scope>
    <source>
        <strain>Corby</strain>
    </source>
</reference>
<protein>
    <recommendedName>
        <fullName evidence="1">Ribosomal RNA small subunit methyltransferase J</fullName>
        <ecNumber evidence="1">2.1.1.242</ecNumber>
    </recommendedName>
    <alternativeName>
        <fullName evidence="1">16S rRNA m2G1516 methyltransferase</fullName>
    </alternativeName>
    <alternativeName>
        <fullName evidence="1">rRNA (guanine-N(2)-)-methyltransferase</fullName>
    </alternativeName>
</protein>
<dbReference type="EC" id="2.1.1.242" evidence="1"/>
<dbReference type="EMBL" id="CP000675">
    <property type="protein sequence ID" value="ABQ55245.1"/>
    <property type="molecule type" value="Genomic_DNA"/>
</dbReference>
<dbReference type="RefSeq" id="WP_011946759.1">
    <property type="nucleotide sequence ID" value="NZ_JAPMSS010000005.1"/>
</dbReference>
<dbReference type="SMR" id="A5ICZ5"/>
<dbReference type="KEGG" id="lpc:LPC_1282"/>
<dbReference type="HOGENOM" id="CLU_076324_1_0_6"/>
<dbReference type="GO" id="GO:0005737">
    <property type="term" value="C:cytoplasm"/>
    <property type="evidence" value="ECO:0007669"/>
    <property type="project" value="UniProtKB-SubCell"/>
</dbReference>
<dbReference type="GO" id="GO:0008990">
    <property type="term" value="F:rRNA (guanine-N2-)-methyltransferase activity"/>
    <property type="evidence" value="ECO:0007669"/>
    <property type="project" value="UniProtKB-UniRule"/>
</dbReference>
<dbReference type="Gene3D" id="3.40.50.150">
    <property type="entry name" value="Vaccinia Virus protein VP39"/>
    <property type="match status" value="1"/>
</dbReference>
<dbReference type="HAMAP" id="MF_01523">
    <property type="entry name" value="16SrRNA_methyltr_J"/>
    <property type="match status" value="1"/>
</dbReference>
<dbReference type="InterPro" id="IPR007536">
    <property type="entry name" value="16SrRNA_methylTrfase_J"/>
</dbReference>
<dbReference type="InterPro" id="IPR029063">
    <property type="entry name" value="SAM-dependent_MTases_sf"/>
</dbReference>
<dbReference type="PANTHER" id="PTHR36112">
    <property type="entry name" value="RIBOSOMAL RNA SMALL SUBUNIT METHYLTRANSFERASE J"/>
    <property type="match status" value="1"/>
</dbReference>
<dbReference type="PANTHER" id="PTHR36112:SF1">
    <property type="entry name" value="RIBOSOMAL RNA SMALL SUBUNIT METHYLTRANSFERASE J"/>
    <property type="match status" value="1"/>
</dbReference>
<dbReference type="Pfam" id="PF04445">
    <property type="entry name" value="SAM_MT"/>
    <property type="match status" value="1"/>
</dbReference>
<dbReference type="SUPFAM" id="SSF53335">
    <property type="entry name" value="S-adenosyl-L-methionine-dependent methyltransferases"/>
    <property type="match status" value="1"/>
</dbReference>
<evidence type="ECO:0000255" key="1">
    <source>
        <dbReference type="HAMAP-Rule" id="MF_01523"/>
    </source>
</evidence>
<name>RSMJ_LEGPC</name>
<gene>
    <name evidence="1" type="primary">rsmJ</name>
    <name type="ordered locus">LPC_1282</name>
</gene>
<feature type="chain" id="PRO_1000068653" description="Ribosomal RNA small subunit methyltransferase J">
    <location>
        <begin position="1"/>
        <end position="243"/>
    </location>
</feature>
<feature type="binding site" evidence="1">
    <location>
        <begin position="112"/>
        <end position="113"/>
    </location>
    <ligand>
        <name>S-adenosyl-L-methionine</name>
        <dbReference type="ChEBI" id="CHEBI:59789"/>
    </ligand>
</feature>
<feature type="binding site" evidence="1">
    <location>
        <position position="164"/>
    </location>
    <ligand>
        <name>S-adenosyl-L-methionine</name>
        <dbReference type="ChEBI" id="CHEBI:59789"/>
    </ligand>
</feature>
<organism>
    <name type="scientific">Legionella pneumophila (strain Corby)</name>
    <dbReference type="NCBI Taxonomy" id="400673"/>
    <lineage>
        <taxon>Bacteria</taxon>
        <taxon>Pseudomonadati</taxon>
        <taxon>Pseudomonadota</taxon>
        <taxon>Gammaproteobacteria</taxon>
        <taxon>Legionellales</taxon>
        <taxon>Legionellaceae</taxon>
        <taxon>Legionella</taxon>
    </lineage>
</organism>
<proteinExistence type="inferred from homology"/>
<comment type="function">
    <text evidence="1">Specifically methylates the guanosine in position 1516 of 16S rRNA.</text>
</comment>
<comment type="catalytic activity">
    <reaction evidence="1">
        <text>guanosine(1516) in 16S rRNA + S-adenosyl-L-methionine = N(2)-methylguanosine(1516) in 16S rRNA + S-adenosyl-L-homocysteine + H(+)</text>
        <dbReference type="Rhea" id="RHEA:43220"/>
        <dbReference type="Rhea" id="RHEA-COMP:10412"/>
        <dbReference type="Rhea" id="RHEA-COMP:10413"/>
        <dbReference type="ChEBI" id="CHEBI:15378"/>
        <dbReference type="ChEBI" id="CHEBI:57856"/>
        <dbReference type="ChEBI" id="CHEBI:59789"/>
        <dbReference type="ChEBI" id="CHEBI:74269"/>
        <dbReference type="ChEBI" id="CHEBI:74481"/>
        <dbReference type="EC" id="2.1.1.242"/>
    </reaction>
</comment>
<comment type="subcellular location">
    <subcellularLocation>
        <location evidence="1">Cytoplasm</location>
    </subcellularLocation>
</comment>
<comment type="similarity">
    <text evidence="1">Belongs to the methyltransferase superfamily. RsmJ family.</text>
</comment>
<keyword id="KW-0963">Cytoplasm</keyword>
<keyword id="KW-0489">Methyltransferase</keyword>
<keyword id="KW-0698">rRNA processing</keyword>
<keyword id="KW-0949">S-adenosyl-L-methionine</keyword>
<keyword id="KW-0808">Transferase</keyword>
<sequence length="243" mass="27377">MNRIKAVGYENNELKEKAQLLADQLNLQLDQNADTCLFVTPEKLTLKIRNFSLMFADFSTMTWSKRRGEGKKQGLIRACKPTKGIKILDATAGWGKDAAILATFGADVLMLERHPVMAALLADALSRRNEADIQKMCLSLIASDAISFLHSLQEKDYPDIIYIDPMHPERNKSALVKKEMQVLQQLIGTDYDAMELIKLSLSHVKSRVVVKWPQKVKPLLPPDASIDGKTVRFDIYMPQFSSN</sequence>
<accession>A5ICZ5</accession>